<comment type="function">
    <text evidence="1">Specifically catalyzes the cleavage of the D-lactyl ether substituent of MurNAc 6-phosphate, producing GlcNAc 6-phosphate and D-lactate. Together with AnmK, is also required for the utilization of anhydro-N-acetylmuramic acid (anhMurNAc) either imported from the medium or derived from its own cell wall murein, and thus plays a role in cell wall recycling.</text>
</comment>
<comment type="catalytic activity">
    <reaction evidence="1">
        <text>N-acetyl-D-muramate 6-phosphate + H2O = N-acetyl-D-glucosamine 6-phosphate + (R)-lactate</text>
        <dbReference type="Rhea" id="RHEA:26410"/>
        <dbReference type="ChEBI" id="CHEBI:15377"/>
        <dbReference type="ChEBI" id="CHEBI:16004"/>
        <dbReference type="ChEBI" id="CHEBI:57513"/>
        <dbReference type="ChEBI" id="CHEBI:58722"/>
        <dbReference type="EC" id="4.2.1.126"/>
    </reaction>
</comment>
<comment type="pathway">
    <text evidence="1">Amino-sugar metabolism; 1,6-anhydro-N-acetylmuramate degradation.</text>
</comment>
<comment type="pathway">
    <text evidence="1">Amino-sugar metabolism; N-acetylmuramate degradation.</text>
</comment>
<comment type="pathway">
    <text evidence="1">Cell wall biogenesis; peptidoglycan recycling.</text>
</comment>
<comment type="subunit">
    <text evidence="1">Homodimer.</text>
</comment>
<comment type="induction">
    <text evidence="1">Induced by MurNAc 6-phosphate that releases the repressor MurR from the DNA. Repressed by MurR in the absence of MurNAc 6-phosphate.</text>
</comment>
<comment type="miscellaneous">
    <text evidence="1">A lyase-type mechanism (elimination/hydration) is suggested for the cleavage of the lactyl ether bond of MurNAc 6-phosphate, with the formation of an alpha,beta-unsaturated aldehyde intermediate with (E)-stereochemistry, followed by the syn addition of water to give product.</text>
</comment>
<comment type="similarity">
    <text evidence="1">Belongs to the GCKR-like family. MurNAc-6-P etherase subfamily.</text>
</comment>
<keyword id="KW-0119">Carbohydrate metabolism</keyword>
<keyword id="KW-0456">Lyase</keyword>
<keyword id="KW-1185">Reference proteome</keyword>
<gene>
    <name evidence="1" type="primary">murQ</name>
    <name type="ordered locus">ESA_00699</name>
</gene>
<reference key="1">
    <citation type="journal article" date="2010" name="PLoS ONE">
        <title>Genome sequence of Cronobacter sakazakii BAA-894 and comparative genomic hybridization analysis with other Cronobacter species.</title>
        <authorList>
            <person name="Kucerova E."/>
            <person name="Clifton S.W."/>
            <person name="Xia X.Q."/>
            <person name="Long F."/>
            <person name="Porwollik S."/>
            <person name="Fulton L."/>
            <person name="Fronick C."/>
            <person name="Minx P."/>
            <person name="Kyung K."/>
            <person name="Warren W."/>
            <person name="Fulton R."/>
            <person name="Feng D."/>
            <person name="Wollam A."/>
            <person name="Shah N."/>
            <person name="Bhonagiri V."/>
            <person name="Nash W.E."/>
            <person name="Hallsworth-Pepin K."/>
            <person name="Wilson R.K."/>
            <person name="McClelland M."/>
            <person name="Forsythe S.J."/>
        </authorList>
    </citation>
    <scope>NUCLEOTIDE SEQUENCE [LARGE SCALE GENOMIC DNA]</scope>
    <source>
        <strain>ATCC BAA-894</strain>
    </source>
</reference>
<evidence type="ECO:0000255" key="1">
    <source>
        <dbReference type="HAMAP-Rule" id="MF_00068"/>
    </source>
</evidence>
<feature type="chain" id="PRO_1000009116" description="N-acetylmuramic acid 6-phosphate etherase">
    <location>
        <begin position="1"/>
        <end position="297"/>
    </location>
</feature>
<feature type="domain" description="SIS" evidence="1">
    <location>
        <begin position="55"/>
        <end position="218"/>
    </location>
</feature>
<feature type="active site" description="Proton donor" evidence="1">
    <location>
        <position position="83"/>
    </location>
</feature>
<feature type="active site" evidence="1">
    <location>
        <position position="114"/>
    </location>
</feature>
<dbReference type="EC" id="4.2.1.126" evidence="1"/>
<dbReference type="EMBL" id="CP000783">
    <property type="protein sequence ID" value="ABU75977.1"/>
    <property type="molecule type" value="Genomic_DNA"/>
</dbReference>
<dbReference type="RefSeq" id="WP_012124021.1">
    <property type="nucleotide sequence ID" value="NC_009778.1"/>
</dbReference>
<dbReference type="SMR" id="A7MGZ1"/>
<dbReference type="KEGG" id="esa:ESA_00699"/>
<dbReference type="PATRIC" id="fig|290339.8.peg.617"/>
<dbReference type="HOGENOM" id="CLU_049049_1_1_6"/>
<dbReference type="UniPathway" id="UPA00342"/>
<dbReference type="UniPathway" id="UPA00343"/>
<dbReference type="UniPathway" id="UPA00544"/>
<dbReference type="Proteomes" id="UP000000260">
    <property type="component" value="Chromosome"/>
</dbReference>
<dbReference type="GO" id="GO:0097367">
    <property type="term" value="F:carbohydrate derivative binding"/>
    <property type="evidence" value="ECO:0007669"/>
    <property type="project" value="InterPro"/>
</dbReference>
<dbReference type="GO" id="GO:0016835">
    <property type="term" value="F:carbon-oxygen lyase activity"/>
    <property type="evidence" value="ECO:0007669"/>
    <property type="project" value="UniProtKB-UniRule"/>
</dbReference>
<dbReference type="GO" id="GO:0016803">
    <property type="term" value="F:ether hydrolase activity"/>
    <property type="evidence" value="ECO:0007669"/>
    <property type="project" value="TreeGrafter"/>
</dbReference>
<dbReference type="GO" id="GO:0097175">
    <property type="term" value="P:1,6-anhydro-N-acetyl-beta-muramic acid catabolic process"/>
    <property type="evidence" value="ECO:0007669"/>
    <property type="project" value="UniProtKB-UniRule"/>
</dbReference>
<dbReference type="GO" id="GO:0046348">
    <property type="term" value="P:amino sugar catabolic process"/>
    <property type="evidence" value="ECO:0007669"/>
    <property type="project" value="InterPro"/>
</dbReference>
<dbReference type="GO" id="GO:0097173">
    <property type="term" value="P:N-acetylmuramic acid catabolic process"/>
    <property type="evidence" value="ECO:0007669"/>
    <property type="project" value="UniProtKB-UniPathway"/>
</dbReference>
<dbReference type="GO" id="GO:0009254">
    <property type="term" value="P:peptidoglycan turnover"/>
    <property type="evidence" value="ECO:0007669"/>
    <property type="project" value="UniProtKB-UniRule"/>
</dbReference>
<dbReference type="CDD" id="cd05007">
    <property type="entry name" value="SIS_Etherase"/>
    <property type="match status" value="1"/>
</dbReference>
<dbReference type="FunFam" id="1.10.8.1080:FF:000001">
    <property type="entry name" value="N-acetylmuramic acid 6-phosphate etherase"/>
    <property type="match status" value="1"/>
</dbReference>
<dbReference type="FunFam" id="3.40.50.10490:FF:000014">
    <property type="entry name" value="N-acetylmuramic acid 6-phosphate etherase"/>
    <property type="match status" value="1"/>
</dbReference>
<dbReference type="Gene3D" id="1.10.8.1080">
    <property type="match status" value="1"/>
</dbReference>
<dbReference type="Gene3D" id="3.40.50.10490">
    <property type="entry name" value="Glucose-6-phosphate isomerase like protein, domain 1"/>
    <property type="match status" value="1"/>
</dbReference>
<dbReference type="HAMAP" id="MF_00068">
    <property type="entry name" value="MurQ"/>
    <property type="match status" value="1"/>
</dbReference>
<dbReference type="InterPro" id="IPR005488">
    <property type="entry name" value="Etherase_MurQ"/>
</dbReference>
<dbReference type="InterPro" id="IPR005486">
    <property type="entry name" value="Glucokinase_regulatory_CS"/>
</dbReference>
<dbReference type="InterPro" id="IPR040190">
    <property type="entry name" value="MURQ/GCKR"/>
</dbReference>
<dbReference type="InterPro" id="IPR001347">
    <property type="entry name" value="SIS_dom"/>
</dbReference>
<dbReference type="InterPro" id="IPR046348">
    <property type="entry name" value="SIS_dom_sf"/>
</dbReference>
<dbReference type="NCBIfam" id="TIGR00274">
    <property type="entry name" value="N-acetylmuramic acid 6-phosphate etherase"/>
    <property type="match status" value="1"/>
</dbReference>
<dbReference type="NCBIfam" id="NF003915">
    <property type="entry name" value="PRK05441.1"/>
    <property type="match status" value="1"/>
</dbReference>
<dbReference type="NCBIfam" id="NF009222">
    <property type="entry name" value="PRK12570.1"/>
    <property type="match status" value="1"/>
</dbReference>
<dbReference type="PANTHER" id="PTHR10088">
    <property type="entry name" value="GLUCOKINASE REGULATORY PROTEIN"/>
    <property type="match status" value="1"/>
</dbReference>
<dbReference type="PANTHER" id="PTHR10088:SF5">
    <property type="entry name" value="N-ACETYLMURAMIC ACID 6-PHOSPHATE ETHERASE"/>
    <property type="match status" value="1"/>
</dbReference>
<dbReference type="Pfam" id="PF20741">
    <property type="entry name" value="GKRP-like_C"/>
    <property type="match status" value="1"/>
</dbReference>
<dbReference type="Pfam" id="PF22645">
    <property type="entry name" value="GKRP_SIS_N"/>
    <property type="match status" value="1"/>
</dbReference>
<dbReference type="SUPFAM" id="SSF53697">
    <property type="entry name" value="SIS domain"/>
    <property type="match status" value="1"/>
</dbReference>
<dbReference type="PROSITE" id="PS01272">
    <property type="entry name" value="GCKR"/>
    <property type="match status" value="1"/>
</dbReference>
<dbReference type="PROSITE" id="PS51464">
    <property type="entry name" value="SIS"/>
    <property type="match status" value="1"/>
</dbReference>
<accession>A7MGZ1</accession>
<proteinExistence type="inferred from homology"/>
<sequence>MNLGSLVSETRNPDTLDLDALPTLEMLRRFNEEDKRVAYAVSETLPEVAKAVDAAAAALTRGGRLIYMGAGTSGRLGVLDASECPPTFGVPHGVVVGLIAGGPGALLKAVEGAEDNAQLGEDDLKAIGLNARDMVVGLAASGRTPYVIGGLKYARALGCATAAISCNPGSPIAEAAEIAISPVVGPEALTGSTRLKSGTAQKFVLNMISTGAMVKCGKVYQNLMVDMKATNVKLVDRACRMVMEATGVTREEAEAVLTQTEYEVKPAILMVLTGLDAQAAHARLAAHNGFLRAALQP</sequence>
<protein>
    <recommendedName>
        <fullName evidence="1">N-acetylmuramic acid 6-phosphate etherase</fullName>
        <shortName evidence="1">MurNAc-6-P etherase</shortName>
        <ecNumber evidence="1">4.2.1.126</ecNumber>
    </recommendedName>
    <alternativeName>
        <fullName evidence="1">N-acetylmuramic acid 6-phosphate hydrolase</fullName>
    </alternativeName>
    <alternativeName>
        <fullName evidence="1">N-acetylmuramic acid 6-phosphate lyase</fullName>
    </alternativeName>
</protein>
<organism>
    <name type="scientific">Cronobacter sakazakii (strain ATCC BAA-894)</name>
    <name type="common">Enterobacter sakazakii</name>
    <dbReference type="NCBI Taxonomy" id="290339"/>
    <lineage>
        <taxon>Bacteria</taxon>
        <taxon>Pseudomonadati</taxon>
        <taxon>Pseudomonadota</taxon>
        <taxon>Gammaproteobacteria</taxon>
        <taxon>Enterobacterales</taxon>
        <taxon>Enterobacteriaceae</taxon>
        <taxon>Cronobacter</taxon>
    </lineage>
</organism>
<name>MURQ_CROS8</name>